<organism>
    <name type="scientific">Dictyostelium discoideum</name>
    <name type="common">Social amoeba</name>
    <dbReference type="NCBI Taxonomy" id="44689"/>
    <lineage>
        <taxon>Eukaryota</taxon>
        <taxon>Amoebozoa</taxon>
        <taxon>Evosea</taxon>
        <taxon>Eumycetozoa</taxon>
        <taxon>Dictyostelia</taxon>
        <taxon>Dictyosteliales</taxon>
        <taxon>Dictyosteliaceae</taxon>
        <taxon>Dictyostelium</taxon>
    </lineage>
</organism>
<sequence>MPPICNSIENENNSFELTTTISFLKKSKLFKKEINVNEIVSINISQILGEYNSFLINNTIEDLESAIAQNIHN</sequence>
<name>Y2047_DICDI</name>
<protein>
    <recommendedName>
        <fullName>Uncharacterized protein DDB_G0293616</fullName>
    </recommendedName>
</protein>
<keyword id="KW-1185">Reference proteome</keyword>
<gene>
    <name type="ORF">DDB_G0293616</name>
</gene>
<reference key="1">
    <citation type="journal article" date="2005" name="Nature">
        <title>The genome of the social amoeba Dictyostelium discoideum.</title>
        <authorList>
            <person name="Eichinger L."/>
            <person name="Pachebat J.A."/>
            <person name="Gloeckner G."/>
            <person name="Rajandream M.A."/>
            <person name="Sucgang R."/>
            <person name="Berriman M."/>
            <person name="Song J."/>
            <person name="Olsen R."/>
            <person name="Szafranski K."/>
            <person name="Xu Q."/>
            <person name="Tunggal B."/>
            <person name="Kummerfeld S."/>
            <person name="Madera M."/>
            <person name="Konfortov B.A."/>
            <person name="Rivero F."/>
            <person name="Bankier A.T."/>
            <person name="Lehmann R."/>
            <person name="Hamlin N."/>
            <person name="Davies R."/>
            <person name="Gaudet P."/>
            <person name="Fey P."/>
            <person name="Pilcher K."/>
            <person name="Chen G."/>
            <person name="Saunders D."/>
            <person name="Sodergren E.J."/>
            <person name="Davis P."/>
            <person name="Kerhornou A."/>
            <person name="Nie X."/>
            <person name="Hall N."/>
            <person name="Anjard C."/>
            <person name="Hemphill L."/>
            <person name="Bason N."/>
            <person name="Farbrother P."/>
            <person name="Desany B."/>
            <person name="Just E."/>
            <person name="Morio T."/>
            <person name="Rost R."/>
            <person name="Churcher C.M."/>
            <person name="Cooper J."/>
            <person name="Haydock S."/>
            <person name="van Driessche N."/>
            <person name="Cronin A."/>
            <person name="Goodhead I."/>
            <person name="Muzny D.M."/>
            <person name="Mourier T."/>
            <person name="Pain A."/>
            <person name="Lu M."/>
            <person name="Harper D."/>
            <person name="Lindsay R."/>
            <person name="Hauser H."/>
            <person name="James K.D."/>
            <person name="Quiles M."/>
            <person name="Madan Babu M."/>
            <person name="Saito T."/>
            <person name="Buchrieser C."/>
            <person name="Wardroper A."/>
            <person name="Felder M."/>
            <person name="Thangavelu M."/>
            <person name="Johnson D."/>
            <person name="Knights A."/>
            <person name="Loulseged H."/>
            <person name="Mungall K.L."/>
            <person name="Oliver K."/>
            <person name="Price C."/>
            <person name="Quail M.A."/>
            <person name="Urushihara H."/>
            <person name="Hernandez J."/>
            <person name="Rabbinowitsch E."/>
            <person name="Steffen D."/>
            <person name="Sanders M."/>
            <person name="Ma J."/>
            <person name="Kohara Y."/>
            <person name="Sharp S."/>
            <person name="Simmonds M.N."/>
            <person name="Spiegler S."/>
            <person name="Tivey A."/>
            <person name="Sugano S."/>
            <person name="White B."/>
            <person name="Walker D."/>
            <person name="Woodward J.R."/>
            <person name="Winckler T."/>
            <person name="Tanaka Y."/>
            <person name="Shaulsky G."/>
            <person name="Schleicher M."/>
            <person name="Weinstock G.M."/>
            <person name="Rosenthal A."/>
            <person name="Cox E.C."/>
            <person name="Chisholm R.L."/>
            <person name="Gibbs R.A."/>
            <person name="Loomis W.F."/>
            <person name="Platzer M."/>
            <person name="Kay R.R."/>
            <person name="Williams J.G."/>
            <person name="Dear P.H."/>
            <person name="Noegel A.A."/>
            <person name="Barrell B.G."/>
            <person name="Kuspa A."/>
        </authorList>
    </citation>
    <scope>NUCLEOTIDE SEQUENCE [LARGE SCALE GENOMIC DNA]</scope>
    <source>
        <strain>AX4</strain>
    </source>
</reference>
<accession>Q54BH8</accession>
<dbReference type="EMBL" id="AAFI02000218">
    <property type="protein sequence ID" value="EAL60620.1"/>
    <property type="molecule type" value="Genomic_DNA"/>
</dbReference>
<dbReference type="RefSeq" id="XP_629051.1">
    <property type="nucleotide sequence ID" value="XM_629049.1"/>
</dbReference>
<dbReference type="PaxDb" id="44689-DDB0192047"/>
<dbReference type="EnsemblProtists" id="EAL60620">
    <property type="protein sequence ID" value="EAL60620"/>
    <property type="gene ID" value="DDB_G0293616"/>
</dbReference>
<dbReference type="GeneID" id="8629341"/>
<dbReference type="KEGG" id="ddi:DDB_G0293616"/>
<dbReference type="dictyBase" id="DDB_G0293616"/>
<dbReference type="VEuPathDB" id="AmoebaDB:DDB_G0293616"/>
<dbReference type="HOGENOM" id="CLU_2710025_0_0_1"/>
<dbReference type="InParanoid" id="Q54BH8"/>
<dbReference type="PRO" id="PR:Q54BH8"/>
<dbReference type="Proteomes" id="UP000002195">
    <property type="component" value="Chromosome 6"/>
</dbReference>
<feature type="chain" id="PRO_0000344397" description="Uncharacterized protein DDB_G0293616">
    <location>
        <begin position="1"/>
        <end position="73"/>
    </location>
</feature>
<proteinExistence type="predicted"/>